<proteinExistence type="inferred from homology"/>
<keyword id="KW-0963">Cytoplasm</keyword>
<keyword id="KW-0396">Initiation factor</keyword>
<keyword id="KW-0648">Protein biosynthesis</keyword>
<keyword id="KW-1185">Reference proteome</keyword>
<sequence>MSTIAKDQTQINEKIRAKELRLIGQDGEQIGVKSKREALEMAERVDLDLVVVAPNAKPPVARIMDYGKYKFEQQKKEKEMKKKQKVINVKELRLSPTIEEHDFQTKLKNGRKFLSKGDKCKVSIRFRGRAITHKEIGQRVLEKFADECKDIATVEQKPKMEGRQMFIMLAPINEK</sequence>
<feature type="chain" id="PRO_0000177582" description="Translation initiation factor IF-3">
    <location>
        <begin position="1"/>
        <end position="175"/>
    </location>
</feature>
<protein>
    <recommendedName>
        <fullName evidence="1">Translation initiation factor IF-3</fullName>
    </recommendedName>
</protein>
<evidence type="ECO:0000255" key="1">
    <source>
        <dbReference type="HAMAP-Rule" id="MF_00080"/>
    </source>
</evidence>
<name>IF3_STAEQ</name>
<accession>Q5HNM3</accession>
<dbReference type="EMBL" id="CP000029">
    <property type="protein sequence ID" value="AAW54609.1"/>
    <property type="molecule type" value="Genomic_DNA"/>
</dbReference>
<dbReference type="RefSeq" id="WP_001830789.1">
    <property type="nucleotide sequence ID" value="NC_002976.3"/>
</dbReference>
<dbReference type="SMR" id="Q5HNM3"/>
<dbReference type="STRING" id="176279.SERP1244"/>
<dbReference type="GeneID" id="50018530"/>
<dbReference type="KEGG" id="ser:SERP1244"/>
<dbReference type="eggNOG" id="COG0290">
    <property type="taxonomic scope" value="Bacteria"/>
</dbReference>
<dbReference type="HOGENOM" id="CLU_054919_3_2_9"/>
<dbReference type="Proteomes" id="UP000000531">
    <property type="component" value="Chromosome"/>
</dbReference>
<dbReference type="GO" id="GO:0005829">
    <property type="term" value="C:cytosol"/>
    <property type="evidence" value="ECO:0007669"/>
    <property type="project" value="TreeGrafter"/>
</dbReference>
<dbReference type="GO" id="GO:0016020">
    <property type="term" value="C:membrane"/>
    <property type="evidence" value="ECO:0007669"/>
    <property type="project" value="TreeGrafter"/>
</dbReference>
<dbReference type="GO" id="GO:0043022">
    <property type="term" value="F:ribosome binding"/>
    <property type="evidence" value="ECO:0007669"/>
    <property type="project" value="TreeGrafter"/>
</dbReference>
<dbReference type="GO" id="GO:0003743">
    <property type="term" value="F:translation initiation factor activity"/>
    <property type="evidence" value="ECO:0007669"/>
    <property type="project" value="UniProtKB-UniRule"/>
</dbReference>
<dbReference type="GO" id="GO:0032790">
    <property type="term" value="P:ribosome disassembly"/>
    <property type="evidence" value="ECO:0007669"/>
    <property type="project" value="TreeGrafter"/>
</dbReference>
<dbReference type="FunFam" id="3.10.20.80:FF:000001">
    <property type="entry name" value="Translation initiation factor IF-3"/>
    <property type="match status" value="1"/>
</dbReference>
<dbReference type="FunFam" id="3.30.110.10:FF:000001">
    <property type="entry name" value="Translation initiation factor IF-3"/>
    <property type="match status" value="1"/>
</dbReference>
<dbReference type="Gene3D" id="3.30.110.10">
    <property type="entry name" value="Translation initiation factor 3 (IF-3), C-terminal domain"/>
    <property type="match status" value="1"/>
</dbReference>
<dbReference type="Gene3D" id="3.10.20.80">
    <property type="entry name" value="Translation initiation factor 3 (IF-3), N-terminal domain"/>
    <property type="match status" value="1"/>
</dbReference>
<dbReference type="HAMAP" id="MF_00080">
    <property type="entry name" value="IF_3"/>
    <property type="match status" value="1"/>
</dbReference>
<dbReference type="InterPro" id="IPR036788">
    <property type="entry name" value="T_IF-3_C_sf"/>
</dbReference>
<dbReference type="InterPro" id="IPR036787">
    <property type="entry name" value="T_IF-3_N_sf"/>
</dbReference>
<dbReference type="InterPro" id="IPR019813">
    <property type="entry name" value="Translation_initiation_fac3_CS"/>
</dbReference>
<dbReference type="InterPro" id="IPR001288">
    <property type="entry name" value="Translation_initiation_fac_3"/>
</dbReference>
<dbReference type="InterPro" id="IPR019815">
    <property type="entry name" value="Translation_initiation_fac_3_C"/>
</dbReference>
<dbReference type="InterPro" id="IPR019814">
    <property type="entry name" value="Translation_initiation_fac_3_N"/>
</dbReference>
<dbReference type="NCBIfam" id="TIGR00168">
    <property type="entry name" value="infC"/>
    <property type="match status" value="1"/>
</dbReference>
<dbReference type="PANTHER" id="PTHR10938">
    <property type="entry name" value="TRANSLATION INITIATION FACTOR IF-3"/>
    <property type="match status" value="1"/>
</dbReference>
<dbReference type="PANTHER" id="PTHR10938:SF0">
    <property type="entry name" value="TRANSLATION INITIATION FACTOR IF-3, MITOCHONDRIAL"/>
    <property type="match status" value="1"/>
</dbReference>
<dbReference type="Pfam" id="PF00707">
    <property type="entry name" value="IF3_C"/>
    <property type="match status" value="1"/>
</dbReference>
<dbReference type="Pfam" id="PF05198">
    <property type="entry name" value="IF3_N"/>
    <property type="match status" value="1"/>
</dbReference>
<dbReference type="SUPFAM" id="SSF55200">
    <property type="entry name" value="Translation initiation factor IF3, C-terminal domain"/>
    <property type="match status" value="1"/>
</dbReference>
<dbReference type="SUPFAM" id="SSF54364">
    <property type="entry name" value="Translation initiation factor IF3, N-terminal domain"/>
    <property type="match status" value="1"/>
</dbReference>
<dbReference type="PROSITE" id="PS00938">
    <property type="entry name" value="IF3"/>
    <property type="match status" value="1"/>
</dbReference>
<organism>
    <name type="scientific">Staphylococcus epidermidis (strain ATCC 35984 / DSM 28319 / BCRC 17069 / CCUG 31568 / BM 3577 / RP62A)</name>
    <dbReference type="NCBI Taxonomy" id="176279"/>
    <lineage>
        <taxon>Bacteria</taxon>
        <taxon>Bacillati</taxon>
        <taxon>Bacillota</taxon>
        <taxon>Bacilli</taxon>
        <taxon>Bacillales</taxon>
        <taxon>Staphylococcaceae</taxon>
        <taxon>Staphylococcus</taxon>
    </lineage>
</organism>
<comment type="function">
    <text evidence="1">IF-3 binds to the 30S ribosomal subunit and shifts the equilibrium between 70S ribosomes and their 50S and 30S subunits in favor of the free subunits, thus enhancing the availability of 30S subunits on which protein synthesis initiation begins.</text>
</comment>
<comment type="subunit">
    <text evidence="1">Monomer.</text>
</comment>
<comment type="subcellular location">
    <subcellularLocation>
        <location evidence="1">Cytoplasm</location>
    </subcellularLocation>
</comment>
<comment type="similarity">
    <text evidence="1">Belongs to the IF-3 family.</text>
</comment>
<gene>
    <name evidence="1" type="primary">infC</name>
    <name type="ordered locus">SERP1244</name>
</gene>
<reference key="1">
    <citation type="journal article" date="2005" name="J. Bacteriol.">
        <title>Insights on evolution of virulence and resistance from the complete genome analysis of an early methicillin-resistant Staphylococcus aureus strain and a biofilm-producing methicillin-resistant Staphylococcus epidermidis strain.</title>
        <authorList>
            <person name="Gill S.R."/>
            <person name="Fouts D.E."/>
            <person name="Archer G.L."/>
            <person name="Mongodin E.F."/>
            <person name="DeBoy R.T."/>
            <person name="Ravel J."/>
            <person name="Paulsen I.T."/>
            <person name="Kolonay J.F."/>
            <person name="Brinkac L.M."/>
            <person name="Beanan M.J."/>
            <person name="Dodson R.J."/>
            <person name="Daugherty S.C."/>
            <person name="Madupu R."/>
            <person name="Angiuoli S.V."/>
            <person name="Durkin A.S."/>
            <person name="Haft D.H."/>
            <person name="Vamathevan J.J."/>
            <person name="Khouri H."/>
            <person name="Utterback T.R."/>
            <person name="Lee C."/>
            <person name="Dimitrov G."/>
            <person name="Jiang L."/>
            <person name="Qin H."/>
            <person name="Weidman J."/>
            <person name="Tran K."/>
            <person name="Kang K.H."/>
            <person name="Hance I.R."/>
            <person name="Nelson K.E."/>
            <person name="Fraser C.M."/>
        </authorList>
    </citation>
    <scope>NUCLEOTIDE SEQUENCE [LARGE SCALE GENOMIC DNA]</scope>
    <source>
        <strain>ATCC 35984 / DSM 28319 / BCRC 17069 / CCUG 31568 / BM 3577 / RP62A</strain>
    </source>
</reference>